<sequence length="515" mass="56225">MVVAYKHEPFTDFSVEANKLAFEEGLKKVESYLGQDYPLIIGGEKITTEDKIVSVNPANKEELVGRVSKASRELAEKAMQVADETFQTWRKSKPEMRADILFRAAAIVRRRKHEFSAILVKEAGKPWNEADADTAEAIDFMEYYGRQMLKLKDGIPVESRPIEYNRFSYIPLGVGVIISPWNFPFAIMAGMTTAALVSGNTVLLKPASTTPVVAAKFMEVLEEAGLPAGVVNFVPGNGSEVGDYLVDHPRTRFISFTGSRDVGIRIYERAAKVNPGQIWLKRVIAEMGGKDTIVVDKEADLELAAKSIVASAFGFSGQKCSACSRAVIHEDVYDHVLNRAVELTKELTVANPAVLGTNMGPVNDQAAFDKVMSYVAIGKEEGRILAGGEGDDSKGWFIQPTIVADVAEDARLMKEEIFGPVVAFCKAKDFDHALAIANNTEYGLTGAVISNNRDHIEKAREDFHVGNLYFNRGCTGAIVGYQPFGGFNMSGTDSKAGGPDYLALHMQAKTTSETL</sequence>
<dbReference type="EC" id="1.2.1.88" evidence="1"/>
<dbReference type="EMBL" id="CP001177">
    <property type="protein sequence ID" value="ACJ77275.1"/>
    <property type="molecule type" value="Genomic_DNA"/>
</dbReference>
<dbReference type="SMR" id="B7HSW8"/>
<dbReference type="KEGG" id="bcr:BCAH187_A0381"/>
<dbReference type="HOGENOM" id="CLU_005391_0_0_9"/>
<dbReference type="UniPathway" id="UPA00261">
    <property type="reaction ID" value="UER00374"/>
</dbReference>
<dbReference type="Proteomes" id="UP000002214">
    <property type="component" value="Chromosome"/>
</dbReference>
<dbReference type="GO" id="GO:0009898">
    <property type="term" value="C:cytoplasmic side of plasma membrane"/>
    <property type="evidence" value="ECO:0007669"/>
    <property type="project" value="TreeGrafter"/>
</dbReference>
<dbReference type="GO" id="GO:0003842">
    <property type="term" value="F:1-pyrroline-5-carboxylate dehydrogenase activity"/>
    <property type="evidence" value="ECO:0007669"/>
    <property type="project" value="UniProtKB-UniRule"/>
</dbReference>
<dbReference type="GO" id="GO:0006537">
    <property type="term" value="P:glutamate biosynthetic process"/>
    <property type="evidence" value="ECO:0007669"/>
    <property type="project" value="UniProtKB-UniRule"/>
</dbReference>
<dbReference type="GO" id="GO:0010133">
    <property type="term" value="P:proline catabolic process to glutamate"/>
    <property type="evidence" value="ECO:0007669"/>
    <property type="project" value="UniProtKB-UniPathway"/>
</dbReference>
<dbReference type="CDD" id="cd07124">
    <property type="entry name" value="ALDH_PutA-P5CDH-RocA"/>
    <property type="match status" value="1"/>
</dbReference>
<dbReference type="FunFam" id="3.40.309.10:FF:000005">
    <property type="entry name" value="1-pyrroline-5-carboxylate dehydrogenase 1"/>
    <property type="match status" value="1"/>
</dbReference>
<dbReference type="FunFam" id="3.40.605.10:FF:000045">
    <property type="entry name" value="1-pyrroline-5-carboxylate dehydrogenase 1"/>
    <property type="match status" value="1"/>
</dbReference>
<dbReference type="Gene3D" id="3.40.605.10">
    <property type="entry name" value="Aldehyde Dehydrogenase, Chain A, domain 1"/>
    <property type="match status" value="1"/>
</dbReference>
<dbReference type="Gene3D" id="3.40.309.10">
    <property type="entry name" value="Aldehyde Dehydrogenase, Chain A, domain 2"/>
    <property type="match status" value="1"/>
</dbReference>
<dbReference type="HAMAP" id="MF_00733">
    <property type="entry name" value="RocA"/>
    <property type="match status" value="1"/>
</dbReference>
<dbReference type="InterPro" id="IPR016161">
    <property type="entry name" value="Ald_DH/histidinol_DH"/>
</dbReference>
<dbReference type="InterPro" id="IPR016163">
    <property type="entry name" value="Ald_DH_C"/>
</dbReference>
<dbReference type="InterPro" id="IPR016160">
    <property type="entry name" value="Ald_DH_CS_CYS"/>
</dbReference>
<dbReference type="InterPro" id="IPR029510">
    <property type="entry name" value="Ald_DH_CS_GLU"/>
</dbReference>
<dbReference type="InterPro" id="IPR016162">
    <property type="entry name" value="Ald_DH_N"/>
</dbReference>
<dbReference type="InterPro" id="IPR015590">
    <property type="entry name" value="Aldehyde_DH_dom"/>
</dbReference>
<dbReference type="InterPro" id="IPR050485">
    <property type="entry name" value="Proline_metab_enzyme"/>
</dbReference>
<dbReference type="InterPro" id="IPR005932">
    <property type="entry name" value="RocA"/>
</dbReference>
<dbReference type="InterPro" id="IPR047597">
    <property type="entry name" value="RocA_bacillales"/>
</dbReference>
<dbReference type="NCBIfam" id="TIGR01237">
    <property type="entry name" value="D1pyr5carbox2"/>
    <property type="match status" value="1"/>
</dbReference>
<dbReference type="NCBIfam" id="NF002852">
    <property type="entry name" value="PRK03137.1"/>
    <property type="match status" value="1"/>
</dbReference>
<dbReference type="PANTHER" id="PTHR42862">
    <property type="entry name" value="DELTA-1-PYRROLINE-5-CARBOXYLATE DEHYDROGENASE 1, ISOFORM A-RELATED"/>
    <property type="match status" value="1"/>
</dbReference>
<dbReference type="PANTHER" id="PTHR42862:SF1">
    <property type="entry name" value="DELTA-1-PYRROLINE-5-CARBOXYLATE DEHYDROGENASE 2, ISOFORM A-RELATED"/>
    <property type="match status" value="1"/>
</dbReference>
<dbReference type="Pfam" id="PF00171">
    <property type="entry name" value="Aldedh"/>
    <property type="match status" value="1"/>
</dbReference>
<dbReference type="SUPFAM" id="SSF53720">
    <property type="entry name" value="ALDH-like"/>
    <property type="match status" value="1"/>
</dbReference>
<dbReference type="PROSITE" id="PS00070">
    <property type="entry name" value="ALDEHYDE_DEHYDR_CYS"/>
    <property type="match status" value="1"/>
</dbReference>
<dbReference type="PROSITE" id="PS00687">
    <property type="entry name" value="ALDEHYDE_DEHYDR_GLU"/>
    <property type="match status" value="1"/>
</dbReference>
<proteinExistence type="inferred from homology"/>
<organism>
    <name type="scientific">Bacillus cereus (strain AH187)</name>
    <dbReference type="NCBI Taxonomy" id="405534"/>
    <lineage>
        <taxon>Bacteria</taxon>
        <taxon>Bacillati</taxon>
        <taxon>Bacillota</taxon>
        <taxon>Bacilli</taxon>
        <taxon>Bacillales</taxon>
        <taxon>Bacillaceae</taxon>
        <taxon>Bacillus</taxon>
        <taxon>Bacillus cereus group</taxon>
    </lineage>
</organism>
<gene>
    <name evidence="1" type="primary">rocA</name>
    <name type="ordered locus">BCAH187_A0381</name>
</gene>
<keyword id="KW-0520">NAD</keyword>
<keyword id="KW-0560">Oxidoreductase</keyword>
<reference key="1">
    <citation type="submission" date="2008-10" db="EMBL/GenBank/DDBJ databases">
        <title>Genome sequence of Bacillus cereus AH187.</title>
        <authorList>
            <person name="Dodson R.J."/>
            <person name="Durkin A.S."/>
            <person name="Rosovitz M.J."/>
            <person name="Rasko D.A."/>
            <person name="Kolsto A.B."/>
            <person name="Okstad O.A."/>
            <person name="Ravel J."/>
            <person name="Sutton G."/>
        </authorList>
    </citation>
    <scope>NUCLEOTIDE SEQUENCE [LARGE SCALE GENOMIC DNA]</scope>
    <source>
        <strain>AH187</strain>
    </source>
</reference>
<comment type="catalytic activity">
    <reaction evidence="1">
        <text>L-glutamate 5-semialdehyde + NAD(+) + H2O = L-glutamate + NADH + 2 H(+)</text>
        <dbReference type="Rhea" id="RHEA:30235"/>
        <dbReference type="ChEBI" id="CHEBI:15377"/>
        <dbReference type="ChEBI" id="CHEBI:15378"/>
        <dbReference type="ChEBI" id="CHEBI:29985"/>
        <dbReference type="ChEBI" id="CHEBI:57540"/>
        <dbReference type="ChEBI" id="CHEBI:57945"/>
        <dbReference type="ChEBI" id="CHEBI:58066"/>
        <dbReference type="EC" id="1.2.1.88"/>
    </reaction>
</comment>
<comment type="pathway">
    <text evidence="1">Amino-acid degradation; L-proline degradation into L-glutamate; L-glutamate from L-proline: step 2/2.</text>
</comment>
<comment type="similarity">
    <text evidence="1">Belongs to the aldehyde dehydrogenase family. RocA subfamily.</text>
</comment>
<evidence type="ECO:0000255" key="1">
    <source>
        <dbReference type="HAMAP-Rule" id="MF_00733"/>
    </source>
</evidence>
<accession>B7HSW8</accession>
<feature type="chain" id="PRO_1000189844" description="1-pyrroline-5-carboxylate dehydrogenase">
    <location>
        <begin position="1"/>
        <end position="515"/>
    </location>
</feature>
<feature type="active site" evidence="1">
    <location>
        <position position="286"/>
    </location>
</feature>
<feature type="active site" evidence="1">
    <location>
        <position position="320"/>
    </location>
</feature>
<name>ROCA_BACC7</name>
<protein>
    <recommendedName>
        <fullName evidence="1">1-pyrroline-5-carboxylate dehydrogenase</fullName>
        <shortName evidence="1">P5C dehydrogenase</shortName>
        <ecNumber evidence="1">1.2.1.88</ecNumber>
    </recommendedName>
    <alternativeName>
        <fullName evidence="1">L-glutamate gamma-semialdehyde dehydrogenase</fullName>
    </alternativeName>
</protein>